<sequence>MAGKKGSSPNVYAYFKVDGDKVSRIKKVCSRCGKGTYMSEHKDRNTCGKCGLTEFKQ</sequence>
<reference key="1">
    <citation type="journal article" date="2010" name="Proc. Natl. Acad. Sci. U.S.A.">
        <title>Nitrosopumilus maritimus genome reveals unique mechanisms for nitrification and autotrophy in globally distributed marine crenarchaea.</title>
        <authorList>
            <person name="Walker C.B."/>
            <person name="de la Torre J.R."/>
            <person name="Klotz M.G."/>
            <person name="Urakawa H."/>
            <person name="Pinel N."/>
            <person name="Arp D.J."/>
            <person name="Brochier-Armanet C."/>
            <person name="Chain P.S."/>
            <person name="Chan P.P."/>
            <person name="Gollabgir A."/>
            <person name="Hemp J."/>
            <person name="Hugler M."/>
            <person name="Karr E.A."/>
            <person name="Konneke M."/>
            <person name="Shin M."/>
            <person name="Lawton T.J."/>
            <person name="Lowe T."/>
            <person name="Martens-Habbena W."/>
            <person name="Sayavedra-Soto L.A."/>
            <person name="Lang D."/>
            <person name="Sievert S.M."/>
            <person name="Rosenzweig A.C."/>
            <person name="Manning G."/>
            <person name="Stahl D.A."/>
        </authorList>
    </citation>
    <scope>NUCLEOTIDE SEQUENCE [LARGE SCALE GENOMIC DNA]</scope>
    <source>
        <strain>SCM1</strain>
    </source>
</reference>
<keyword id="KW-0479">Metal-binding</keyword>
<keyword id="KW-1185">Reference proteome</keyword>
<keyword id="KW-0687">Ribonucleoprotein</keyword>
<keyword id="KW-0689">Ribosomal protein</keyword>
<keyword id="KW-0862">Zinc</keyword>
<keyword id="KW-0863">Zinc-finger</keyword>
<name>RS27A_NITMS</name>
<accession>A9A217</accession>
<proteinExistence type="inferred from homology"/>
<protein>
    <recommendedName>
        <fullName evidence="1">Small ribosomal subunit protein eS31</fullName>
    </recommendedName>
    <alternativeName>
        <fullName evidence="2">30S ribosomal protein S27ae</fullName>
    </alternativeName>
</protein>
<dbReference type="EMBL" id="CP000866">
    <property type="protein sequence ID" value="ABX12430.1"/>
    <property type="molecule type" value="Genomic_DNA"/>
</dbReference>
<dbReference type="RefSeq" id="WP_012214917.1">
    <property type="nucleotide sequence ID" value="NC_010085.1"/>
</dbReference>
<dbReference type="SMR" id="A9A217"/>
<dbReference type="FunCoup" id="A9A217">
    <property type="interactions" value="56"/>
</dbReference>
<dbReference type="STRING" id="436308.Nmar_0534"/>
<dbReference type="EnsemblBacteria" id="ABX12430">
    <property type="protein sequence ID" value="ABX12430"/>
    <property type="gene ID" value="Nmar_0534"/>
</dbReference>
<dbReference type="GeneID" id="5773332"/>
<dbReference type="KEGG" id="nmr:Nmar_0534"/>
<dbReference type="eggNOG" id="arCOG04183">
    <property type="taxonomic scope" value="Archaea"/>
</dbReference>
<dbReference type="HOGENOM" id="CLU_179743_2_0_2"/>
<dbReference type="InParanoid" id="A9A217"/>
<dbReference type="OrthoDB" id="25142at2157"/>
<dbReference type="PhylomeDB" id="A9A217"/>
<dbReference type="Proteomes" id="UP000000792">
    <property type="component" value="Chromosome"/>
</dbReference>
<dbReference type="GO" id="GO:1990904">
    <property type="term" value="C:ribonucleoprotein complex"/>
    <property type="evidence" value="ECO:0007669"/>
    <property type="project" value="UniProtKB-KW"/>
</dbReference>
<dbReference type="GO" id="GO:0005840">
    <property type="term" value="C:ribosome"/>
    <property type="evidence" value="ECO:0007669"/>
    <property type="project" value="UniProtKB-KW"/>
</dbReference>
<dbReference type="GO" id="GO:0003735">
    <property type="term" value="F:structural constituent of ribosome"/>
    <property type="evidence" value="ECO:0007669"/>
    <property type="project" value="InterPro"/>
</dbReference>
<dbReference type="GO" id="GO:0008270">
    <property type="term" value="F:zinc ion binding"/>
    <property type="evidence" value="ECO:0007669"/>
    <property type="project" value="UniProtKB-UniRule"/>
</dbReference>
<dbReference type="GO" id="GO:0006412">
    <property type="term" value="P:translation"/>
    <property type="evidence" value="ECO:0007669"/>
    <property type="project" value="UniProtKB-UniRule"/>
</dbReference>
<dbReference type="Gene3D" id="6.20.50.180">
    <property type="match status" value="1"/>
</dbReference>
<dbReference type="HAMAP" id="MF_00777">
    <property type="entry name" value="Ribosomal_eS31"/>
    <property type="match status" value="1"/>
</dbReference>
<dbReference type="InterPro" id="IPR002906">
    <property type="entry name" value="Ribosomal_eS31"/>
</dbReference>
<dbReference type="InterPro" id="IPR022845">
    <property type="entry name" value="Ribosomal_eS31_arc"/>
</dbReference>
<dbReference type="InterPro" id="IPR011332">
    <property type="entry name" value="Ribosomal_zn-bd"/>
</dbReference>
<dbReference type="NCBIfam" id="NF001669">
    <property type="entry name" value="PRK00432.1"/>
    <property type="match status" value="1"/>
</dbReference>
<dbReference type="Pfam" id="PF01599">
    <property type="entry name" value="Ribosomal_S27"/>
    <property type="match status" value="1"/>
</dbReference>
<dbReference type="SMART" id="SM01402">
    <property type="entry name" value="Ribosomal_S27"/>
    <property type="match status" value="1"/>
</dbReference>
<dbReference type="SUPFAM" id="SSF57829">
    <property type="entry name" value="Zn-binding ribosomal proteins"/>
    <property type="match status" value="1"/>
</dbReference>
<organism>
    <name type="scientific">Nitrosopumilus maritimus (strain SCM1)</name>
    <dbReference type="NCBI Taxonomy" id="436308"/>
    <lineage>
        <taxon>Archaea</taxon>
        <taxon>Nitrososphaerota</taxon>
        <taxon>Nitrososphaeria</taxon>
        <taxon>Nitrosopumilales</taxon>
        <taxon>Nitrosopumilaceae</taxon>
        <taxon>Nitrosopumilus</taxon>
    </lineage>
</organism>
<gene>
    <name evidence="1" type="primary">rps27ae</name>
    <name type="ordered locus">Nmar_0534</name>
</gene>
<evidence type="ECO:0000255" key="1">
    <source>
        <dbReference type="HAMAP-Rule" id="MF_00777"/>
    </source>
</evidence>
<evidence type="ECO:0000305" key="2"/>
<comment type="cofactor">
    <cofactor evidence="1">
        <name>Zn(2+)</name>
        <dbReference type="ChEBI" id="CHEBI:29105"/>
    </cofactor>
    <text evidence="1">Binds 1 zinc ion per subunit.</text>
</comment>
<comment type="subunit">
    <text evidence="1">Part of the 30S ribosomal subunit.</text>
</comment>
<comment type="similarity">
    <text evidence="1">Belongs to the eukaryotic ribosomal protein eS31 family.</text>
</comment>
<feature type="chain" id="PRO_1000194304" description="Small ribosomal subunit protein eS31">
    <location>
        <begin position="1"/>
        <end position="57"/>
    </location>
</feature>
<feature type="zinc finger region" description="C4-type" evidence="1">
    <location>
        <begin position="29"/>
        <end position="50"/>
    </location>
</feature>
<feature type="binding site" evidence="1">
    <location>
        <position position="29"/>
    </location>
    <ligand>
        <name>Zn(2+)</name>
        <dbReference type="ChEBI" id="CHEBI:29105"/>
    </ligand>
</feature>
<feature type="binding site" evidence="1">
    <location>
        <position position="32"/>
    </location>
    <ligand>
        <name>Zn(2+)</name>
        <dbReference type="ChEBI" id="CHEBI:29105"/>
    </ligand>
</feature>
<feature type="binding site" evidence="1">
    <location>
        <position position="47"/>
    </location>
    <ligand>
        <name>Zn(2+)</name>
        <dbReference type="ChEBI" id="CHEBI:29105"/>
    </ligand>
</feature>
<feature type="binding site" evidence="1">
    <location>
        <position position="50"/>
    </location>
    <ligand>
        <name>Zn(2+)</name>
        <dbReference type="ChEBI" id="CHEBI:29105"/>
    </ligand>
</feature>